<comment type="subunit">
    <text evidence="4">Interacts with EEF2KMT.</text>
</comment>
<comment type="interaction">
    <interactant intactId="EBI-751617">
        <id>Q9NVL1</id>
    </interactant>
    <interactant intactId="EBI-359224">
        <id>Q13077</id>
        <label>TRAF1</label>
    </interactant>
    <organismsDiffer>false</organismsDiffer>
    <experiments>3</experiments>
</comment>
<comment type="interaction">
    <interactant intactId="EBI-12845222">
        <id>Q9NVL1-2</id>
    </interactant>
    <interactant intactId="EBI-8643161">
        <id>Q9NX04</id>
        <label>AIRIM</label>
    </interactant>
    <organismsDiffer>false</organismsDiffer>
    <experiments>3</experiments>
</comment>
<comment type="interaction">
    <interactant intactId="EBI-12845222">
        <id>Q9NVL1-2</id>
    </interactant>
    <interactant intactId="EBI-11954519">
        <id>Q49AR9</id>
        <label>ANKS1A</label>
    </interactant>
    <organismsDiffer>false</organismsDiffer>
    <experiments>3</experiments>
</comment>
<comment type="interaction">
    <interactant intactId="EBI-12845222">
        <id>Q9NVL1-2</id>
    </interactant>
    <interactant intactId="EBI-1050106">
        <id>O75934</id>
        <label>BCAS2</label>
    </interactant>
    <organismsDiffer>false</organismsDiffer>
    <experiments>3</experiments>
</comment>
<comment type="interaction">
    <interactant intactId="EBI-12845222">
        <id>Q9NVL1-2</id>
    </interactant>
    <interactant intactId="EBI-745859">
        <id>P55273</id>
        <label>CDKN2D</label>
    </interactant>
    <organismsDiffer>false</organismsDiffer>
    <experiments>3</experiments>
</comment>
<comment type="interaction">
    <interactant intactId="EBI-12845222">
        <id>Q9NVL1-2</id>
    </interactant>
    <interactant intactId="EBI-11063830">
        <id>Q86X02</id>
        <label>CDR2L</label>
    </interactant>
    <organismsDiffer>false</organismsDiffer>
    <experiments>3</experiments>
</comment>
<comment type="interaction">
    <interactant intactId="EBI-12845222">
        <id>Q9NVL1-2</id>
    </interactant>
    <interactant intactId="EBI-747133">
        <id>P27658</id>
        <label>COL8A1</label>
    </interactant>
    <organismsDiffer>false</organismsDiffer>
    <experiments>5</experiments>
</comment>
<comment type="interaction">
    <interactant intactId="EBI-12845222">
        <id>Q9NVL1-2</id>
    </interactant>
    <interactant intactId="EBI-739773">
        <id>Q9BSW2</id>
        <label>CRACR2A</label>
    </interactant>
    <organismsDiffer>false</organismsDiffer>
    <experiments>3</experiments>
</comment>
<comment type="interaction">
    <interactant intactId="EBI-12845222">
        <id>Q9NVL1-2</id>
    </interactant>
    <interactant intactId="EBI-348169">
        <id>P67870</id>
        <label>CSNK2B</label>
    </interactant>
    <organismsDiffer>false</organismsDiffer>
    <experiments>3</experiments>
</comment>
<comment type="interaction">
    <interactant intactId="EBI-12845222">
        <id>Q9NVL1-2</id>
    </interactant>
    <interactant intactId="EBI-1774260">
        <id>Q8WZ74</id>
        <label>CTTNBP2</label>
    </interactant>
    <organismsDiffer>false</organismsDiffer>
    <experiments>3</experiments>
</comment>
<comment type="interaction">
    <interactant intactId="EBI-12845222">
        <id>Q9NVL1-2</id>
    </interactant>
    <interactant intactId="EBI-2880244">
        <id>Q6PKX4</id>
        <label>DOK6</label>
    </interactant>
    <organismsDiffer>false</organismsDiffer>
    <experiments>3</experiments>
</comment>
<comment type="interaction">
    <interactant intactId="EBI-12845222">
        <id>Q9NVL1-2</id>
    </interactant>
    <interactant intactId="EBI-347538">
        <id>Q9Y4H4</id>
        <label>GPSM3</label>
    </interactant>
    <organismsDiffer>false</organismsDiffer>
    <experiments>5</experiments>
</comment>
<comment type="interaction">
    <interactant intactId="EBI-12845222">
        <id>Q9NVL1-2</id>
    </interactant>
    <interactant intactId="EBI-352986">
        <id>P52597</id>
        <label>HNRNPF</label>
    </interactant>
    <organismsDiffer>false</organismsDiffer>
    <experiments>3</experiments>
</comment>
<comment type="interaction">
    <interactant intactId="EBI-12845222">
        <id>Q9NVL1-2</id>
    </interactant>
    <interactant intactId="EBI-12084444">
        <id>Q7Z3Y9</id>
        <label>KRT26</label>
    </interactant>
    <organismsDiffer>false</organismsDiffer>
    <experiments>3</experiments>
</comment>
<comment type="interaction">
    <interactant intactId="EBI-12845222">
        <id>Q9NVL1-2</id>
    </interactant>
    <interactant intactId="EBI-12351611">
        <id>Q16719-2</id>
        <label>KYNU</label>
    </interactant>
    <organismsDiffer>false</organismsDiffer>
    <experiments>3</experiments>
</comment>
<comment type="interaction">
    <interactant intactId="EBI-12845222">
        <id>Q9NVL1-2</id>
    </interactant>
    <interactant intactId="EBI-721864">
        <id>Q96JG8</id>
        <label>MAGED4</label>
    </interactant>
    <organismsDiffer>false</organismsDiffer>
    <experiments>3</experiments>
</comment>
<comment type="interaction">
    <interactant intactId="EBI-12845222">
        <id>Q9NVL1-2</id>
    </interactant>
    <interactant intactId="EBI-11956269">
        <id>Q92824-2</id>
        <label>PCSK5</label>
    </interactant>
    <organismsDiffer>false</organismsDiffer>
    <experiments>3</experiments>
</comment>
<comment type="interaction">
    <interactant intactId="EBI-12845222">
        <id>Q9NVL1-2</id>
    </interactant>
    <interactant intactId="EBI-17236143">
        <id>Q12837</id>
        <label>POU4F2</label>
    </interactant>
    <organismsDiffer>false</organismsDiffer>
    <experiments>5</experiments>
</comment>
<comment type="interaction">
    <interactant intactId="EBI-12845222">
        <id>Q9NVL1-2</id>
    </interactant>
    <interactant intactId="EBI-711613">
        <id>P21673</id>
        <label>SAT1</label>
    </interactant>
    <organismsDiffer>false</organismsDiffer>
    <experiments>3</experiments>
</comment>
<comment type="interaction">
    <interactant intactId="EBI-12845222">
        <id>Q9NVL1-2</id>
    </interactant>
    <interactant intactId="EBI-8463848">
        <id>Q8NB12</id>
        <label>SMYD1</label>
    </interactant>
    <organismsDiffer>false</organismsDiffer>
    <experiments>3</experiments>
</comment>
<comment type="interaction">
    <interactant intactId="EBI-12845222">
        <id>Q9NVL1-2</id>
    </interactant>
    <interactant intactId="EBI-742688">
        <id>Q9NZD8</id>
        <label>SPG21</label>
    </interactant>
    <organismsDiffer>false</organismsDiffer>
    <experiments>3</experiments>
</comment>
<comment type="interaction">
    <interactant intactId="EBI-12845222">
        <id>Q9NVL1-2</id>
    </interactant>
    <interactant intactId="EBI-10191303">
        <id>O95231</id>
        <label>VENTX</label>
    </interactant>
    <organismsDiffer>false</organismsDiffer>
    <experiments>3</experiments>
</comment>
<comment type="alternative products">
    <event type="alternative splicing"/>
    <isoform>
        <id>Q9NVL1-1</id>
        <name>1</name>
        <sequence type="displayed"/>
    </isoform>
    <isoform>
        <id>Q9NVL1-2</id>
        <name>2</name>
        <sequence type="described" ref="VSP_028752"/>
    </isoform>
    <isoform>
        <id>Q9NVL1-3</id>
        <name>3</name>
        <sequence type="described" ref="VSP_042069"/>
    </isoform>
</comment>
<comment type="similarity">
    <text evidence="6">Belongs to the class I-like SAM-binding methyltransferase superfamily. EEF2KMT family.</text>
</comment>
<comment type="caution">
    <text evidence="6">Could be the product of a pseudogene.</text>
</comment>
<reference key="1">
    <citation type="journal article" date="2004" name="Nat. Genet.">
        <title>Complete sequencing and characterization of 21,243 full-length human cDNAs.</title>
        <authorList>
            <person name="Ota T."/>
            <person name="Suzuki Y."/>
            <person name="Nishikawa T."/>
            <person name="Otsuki T."/>
            <person name="Sugiyama T."/>
            <person name="Irie R."/>
            <person name="Wakamatsu A."/>
            <person name="Hayashi K."/>
            <person name="Sato H."/>
            <person name="Nagai K."/>
            <person name="Kimura K."/>
            <person name="Makita H."/>
            <person name="Sekine M."/>
            <person name="Obayashi M."/>
            <person name="Nishi T."/>
            <person name="Shibahara T."/>
            <person name="Tanaka T."/>
            <person name="Ishii S."/>
            <person name="Yamamoto J."/>
            <person name="Saito K."/>
            <person name="Kawai Y."/>
            <person name="Isono Y."/>
            <person name="Nakamura Y."/>
            <person name="Nagahari K."/>
            <person name="Murakami K."/>
            <person name="Yasuda T."/>
            <person name="Iwayanagi T."/>
            <person name="Wagatsuma M."/>
            <person name="Shiratori A."/>
            <person name="Sudo H."/>
            <person name="Hosoiri T."/>
            <person name="Kaku Y."/>
            <person name="Kodaira H."/>
            <person name="Kondo H."/>
            <person name="Sugawara M."/>
            <person name="Takahashi M."/>
            <person name="Kanda K."/>
            <person name="Yokoi T."/>
            <person name="Furuya T."/>
            <person name="Kikkawa E."/>
            <person name="Omura Y."/>
            <person name="Abe K."/>
            <person name="Kamihara K."/>
            <person name="Katsuta N."/>
            <person name="Sato K."/>
            <person name="Tanikawa M."/>
            <person name="Yamazaki M."/>
            <person name="Ninomiya K."/>
            <person name="Ishibashi T."/>
            <person name="Yamashita H."/>
            <person name="Murakawa K."/>
            <person name="Fujimori K."/>
            <person name="Tanai H."/>
            <person name="Kimata M."/>
            <person name="Watanabe M."/>
            <person name="Hiraoka S."/>
            <person name="Chiba Y."/>
            <person name="Ishida S."/>
            <person name="Ono Y."/>
            <person name="Takiguchi S."/>
            <person name="Watanabe S."/>
            <person name="Yosida M."/>
            <person name="Hotuta T."/>
            <person name="Kusano J."/>
            <person name="Kanehori K."/>
            <person name="Takahashi-Fujii A."/>
            <person name="Hara H."/>
            <person name="Tanase T.-O."/>
            <person name="Nomura Y."/>
            <person name="Togiya S."/>
            <person name="Komai F."/>
            <person name="Hara R."/>
            <person name="Takeuchi K."/>
            <person name="Arita M."/>
            <person name="Imose N."/>
            <person name="Musashino K."/>
            <person name="Yuuki H."/>
            <person name="Oshima A."/>
            <person name="Sasaki N."/>
            <person name="Aotsuka S."/>
            <person name="Yoshikawa Y."/>
            <person name="Matsunawa H."/>
            <person name="Ichihara T."/>
            <person name="Shiohata N."/>
            <person name="Sano S."/>
            <person name="Moriya S."/>
            <person name="Momiyama H."/>
            <person name="Satoh N."/>
            <person name="Takami S."/>
            <person name="Terashima Y."/>
            <person name="Suzuki O."/>
            <person name="Nakagawa S."/>
            <person name="Senoh A."/>
            <person name="Mizoguchi H."/>
            <person name="Goto Y."/>
            <person name="Shimizu F."/>
            <person name="Wakebe H."/>
            <person name="Hishigaki H."/>
            <person name="Watanabe T."/>
            <person name="Sugiyama A."/>
            <person name="Takemoto M."/>
            <person name="Kawakami B."/>
            <person name="Yamazaki M."/>
            <person name="Watanabe K."/>
            <person name="Kumagai A."/>
            <person name="Itakura S."/>
            <person name="Fukuzumi Y."/>
            <person name="Fujimori Y."/>
            <person name="Komiyama M."/>
            <person name="Tashiro H."/>
            <person name="Tanigami A."/>
            <person name="Fujiwara T."/>
            <person name="Ono T."/>
            <person name="Yamada K."/>
            <person name="Fujii Y."/>
            <person name="Ozaki K."/>
            <person name="Hirao M."/>
            <person name="Ohmori Y."/>
            <person name="Kawabata A."/>
            <person name="Hikiji T."/>
            <person name="Kobatake N."/>
            <person name="Inagaki H."/>
            <person name="Ikema Y."/>
            <person name="Okamoto S."/>
            <person name="Okitani R."/>
            <person name="Kawakami T."/>
            <person name="Noguchi S."/>
            <person name="Itoh T."/>
            <person name="Shigeta K."/>
            <person name="Senba T."/>
            <person name="Matsumura K."/>
            <person name="Nakajima Y."/>
            <person name="Mizuno T."/>
            <person name="Morinaga M."/>
            <person name="Sasaki M."/>
            <person name="Togashi T."/>
            <person name="Oyama M."/>
            <person name="Hata H."/>
            <person name="Watanabe M."/>
            <person name="Komatsu T."/>
            <person name="Mizushima-Sugano J."/>
            <person name="Satoh T."/>
            <person name="Shirai Y."/>
            <person name="Takahashi Y."/>
            <person name="Nakagawa K."/>
            <person name="Okumura K."/>
            <person name="Nagase T."/>
            <person name="Nomura N."/>
            <person name="Kikuchi H."/>
            <person name="Masuho Y."/>
            <person name="Yamashita R."/>
            <person name="Nakai K."/>
            <person name="Yada T."/>
            <person name="Nakamura Y."/>
            <person name="Ohara O."/>
            <person name="Isogai T."/>
            <person name="Sugano S."/>
        </authorList>
    </citation>
    <scope>NUCLEOTIDE SEQUENCE [LARGE SCALE MRNA] (ISOFORM 1)</scope>
    <scope>VARIANTS SER-7; PRO-30 AND ALA-70</scope>
</reference>
<reference key="2">
    <citation type="journal article" date="2006" name="Nature">
        <title>Human chromosome 11 DNA sequence and analysis including novel gene identification.</title>
        <authorList>
            <person name="Taylor T.D."/>
            <person name="Noguchi H."/>
            <person name="Totoki Y."/>
            <person name="Toyoda A."/>
            <person name="Kuroki Y."/>
            <person name="Dewar K."/>
            <person name="Lloyd C."/>
            <person name="Itoh T."/>
            <person name="Takeda T."/>
            <person name="Kim D.-W."/>
            <person name="She X."/>
            <person name="Barlow K.F."/>
            <person name="Bloom T."/>
            <person name="Bruford E."/>
            <person name="Chang J.L."/>
            <person name="Cuomo C.A."/>
            <person name="Eichler E."/>
            <person name="FitzGerald M.G."/>
            <person name="Jaffe D.B."/>
            <person name="LaButti K."/>
            <person name="Nicol R."/>
            <person name="Park H.-S."/>
            <person name="Seaman C."/>
            <person name="Sougnez C."/>
            <person name="Yang X."/>
            <person name="Zimmer A.R."/>
            <person name="Zody M.C."/>
            <person name="Birren B.W."/>
            <person name="Nusbaum C."/>
            <person name="Fujiyama A."/>
            <person name="Hattori M."/>
            <person name="Rogers J."/>
            <person name="Lander E.S."/>
            <person name="Sakaki Y."/>
        </authorList>
    </citation>
    <scope>NUCLEOTIDE SEQUENCE [LARGE SCALE GENOMIC DNA]</scope>
    <scope>VARIANT ALA-70</scope>
</reference>
<reference key="3">
    <citation type="journal article" date="2004" name="Genome Res.">
        <title>The status, quality, and expansion of the NIH full-length cDNA project: the Mammalian Gene Collection (MGC).</title>
        <authorList>
            <consortium name="The MGC Project Team"/>
        </authorList>
    </citation>
    <scope>NUCLEOTIDE SEQUENCE [LARGE SCALE MRNA] (ISOFORM 2)</scope>
    <source>
        <tissue>Eye</tissue>
    </source>
</reference>
<reference key="4">
    <citation type="journal article" date="2013" name="PLoS Genet.">
        <title>A newly uncovered group of distantly related lysine methyltransferases preferentially interact with molecular chaperones to regulate their activity.</title>
        <authorList>
            <person name="Cloutier P."/>
            <person name="Lavallee-Adam M."/>
            <person name="Faubert D."/>
            <person name="Blanchette M."/>
            <person name="Coulombe B."/>
        </authorList>
    </citation>
    <scope>INTERACTION WITH EEF2KMT</scope>
</reference>
<accession>Q9NVL1</accession>
<accession>Q8N5D3</accession>
<evidence type="ECO:0000250" key="1">
    <source>
        <dbReference type="UniProtKB" id="P47163"/>
    </source>
</evidence>
<evidence type="ECO:0000269" key="2">
    <source>
    </source>
</evidence>
<evidence type="ECO:0000269" key="3">
    <source>
    </source>
</evidence>
<evidence type="ECO:0000269" key="4">
    <source>
    </source>
</evidence>
<evidence type="ECO:0000303" key="5">
    <source>
    </source>
</evidence>
<evidence type="ECO:0000305" key="6"/>
<evidence type="ECO:0000312" key="7">
    <source>
        <dbReference type="HGNC" id="HGNC:25561"/>
    </source>
</evidence>
<name>F86C1_HUMAN</name>
<organism>
    <name type="scientific">Homo sapiens</name>
    <name type="common">Human</name>
    <dbReference type="NCBI Taxonomy" id="9606"/>
    <lineage>
        <taxon>Eukaryota</taxon>
        <taxon>Metazoa</taxon>
        <taxon>Chordata</taxon>
        <taxon>Craniata</taxon>
        <taxon>Vertebrata</taxon>
        <taxon>Euteleostomi</taxon>
        <taxon>Mammalia</taxon>
        <taxon>Eutheria</taxon>
        <taxon>Euarchontoglires</taxon>
        <taxon>Primates</taxon>
        <taxon>Haplorrhini</taxon>
        <taxon>Catarrhini</taxon>
        <taxon>Hominidae</taxon>
        <taxon>Homo</taxon>
    </lineage>
</organism>
<proteinExistence type="uncertain"/>
<feature type="chain" id="PRO_0000307640" description="Putative protein FAM86C1P">
    <location>
        <begin position="1"/>
        <end position="165"/>
    </location>
</feature>
<feature type="splice variant" id="VSP_042069" description="In isoform 3." evidence="6">
    <original>KHEAVHTEPLDELYEVLVETLMAKESTQGHRSYLL</original>
    <variation>KTVKHPVCVKHPPSVKYARCFLSELIKK</variation>
    <location>
        <begin position="53"/>
        <end position="87"/>
    </location>
</feature>
<feature type="splice variant" id="VSP_028752" description="In isoform 2." evidence="5">
    <location>
        <begin position="54"/>
        <end position="87"/>
    </location>
</feature>
<feature type="sequence variant" id="VAR_036619" description="In dbSNP:rs12283300." evidence="2">
    <original>A</original>
    <variation>S</variation>
    <location>
        <position position="7"/>
    </location>
</feature>
<feature type="sequence variant" id="VAR_036620" description="In dbSNP:rs12283346." evidence="2">
    <original>R</original>
    <variation>P</variation>
    <location>
        <position position="30"/>
    </location>
</feature>
<feature type="sequence variant" id="VAR_036621" description="In dbSNP:rs3935309." evidence="2 3">
    <original>V</original>
    <variation>A</variation>
    <location>
        <position position="70"/>
    </location>
</feature>
<feature type="sequence variant" id="VAR_062211" description="In dbSNP:rs57679800.">
    <original>P</original>
    <variation>L</variation>
    <location>
        <position position="135"/>
    </location>
</feature>
<keyword id="KW-0025">Alternative splicing</keyword>
<keyword id="KW-0489">Methyltransferase</keyword>
<keyword id="KW-1185">Reference proteome</keyword>
<keyword id="KW-0949">S-adenosyl-L-methionine</keyword>
<keyword id="KW-0808">Transferase</keyword>
<gene>
    <name evidence="7" type="primary">FAM86C1P</name>
    <name type="synonym">FAM86C</name>
    <name type="synonym">FAM86C1</name>
</gene>
<dbReference type="EC" id="2.1.1.-" evidence="1"/>
<dbReference type="EMBL" id="AK001523">
    <property type="protein sequence ID" value="BAA91739.1"/>
    <property type="molecule type" value="mRNA"/>
</dbReference>
<dbReference type="EMBL" id="AP002495">
    <property type="status" value="NOT_ANNOTATED_CDS"/>
    <property type="molecule type" value="Genomic_DNA"/>
</dbReference>
<dbReference type="EMBL" id="BC032519">
    <property type="protein sequence ID" value="AAH32519.1"/>
    <property type="molecule type" value="mRNA"/>
</dbReference>
<dbReference type="RefSeq" id="NP_001093123.1">
    <property type="nucleotide sequence ID" value="NM_001099653.1"/>
</dbReference>
<dbReference type="RefSeq" id="NP_060642.2">
    <property type="nucleotide sequence ID" value="NM_018172.2"/>
</dbReference>
<dbReference type="RefSeq" id="NP_689776.1">
    <property type="nucleotide sequence ID" value="NM_152563.2"/>
</dbReference>
<dbReference type="SMR" id="Q9NVL1"/>
<dbReference type="BioGRID" id="120496">
    <property type="interactions" value="34"/>
</dbReference>
<dbReference type="IntAct" id="Q9NVL1">
    <property type="interactions" value="33"/>
</dbReference>
<dbReference type="STRING" id="9606.ENSP00000352182"/>
<dbReference type="iPTMnet" id="Q9NVL1"/>
<dbReference type="PhosphoSitePlus" id="Q9NVL1"/>
<dbReference type="BioMuta" id="FAM86C1"/>
<dbReference type="DMDM" id="313104234"/>
<dbReference type="jPOST" id="Q9NVL1"/>
<dbReference type="MassIVE" id="Q9NVL1"/>
<dbReference type="PaxDb" id="9606-ENSP00000352182"/>
<dbReference type="PeptideAtlas" id="Q9NVL1"/>
<dbReference type="Pumba" id="Q9NVL1"/>
<dbReference type="DNASU" id="55199"/>
<dbReference type="UCSC" id="uc001oqv.5">
    <molecule id="Q9NVL1-1"/>
    <property type="organism name" value="human"/>
</dbReference>
<dbReference type="AGR" id="HGNC:25561"/>
<dbReference type="GeneCards" id="FAM86C1P"/>
<dbReference type="HGNC" id="HGNC:25561">
    <property type="gene designation" value="FAM86C1P"/>
</dbReference>
<dbReference type="MIM" id="616124">
    <property type="type" value="gene"/>
</dbReference>
<dbReference type="neXtProt" id="NX_Q9NVL1"/>
<dbReference type="eggNOG" id="KOG2497">
    <property type="taxonomic scope" value="Eukaryota"/>
</dbReference>
<dbReference type="HOGENOM" id="CLU_141101_0_0_1"/>
<dbReference type="InParanoid" id="Q9NVL1"/>
<dbReference type="PAN-GO" id="Q9NVL1">
    <property type="GO annotations" value="2 GO annotations based on evolutionary models"/>
</dbReference>
<dbReference type="PhylomeDB" id="Q9NVL1"/>
<dbReference type="PathwayCommons" id="Q9NVL1"/>
<dbReference type="SignaLink" id="Q9NVL1"/>
<dbReference type="BioGRID-ORCS" id="55199">
    <property type="hits" value="99 hits in 1060 CRISPR screens"/>
</dbReference>
<dbReference type="ChiTaRS" id="FAM86C1">
    <property type="organism name" value="human"/>
</dbReference>
<dbReference type="GenomeRNAi" id="55199"/>
<dbReference type="Pharos" id="Q9NVL1">
    <property type="development level" value="Tdark"/>
</dbReference>
<dbReference type="PRO" id="PR:Q9NVL1"/>
<dbReference type="Proteomes" id="UP000005640">
    <property type="component" value="Chromosome 11"/>
</dbReference>
<dbReference type="RNAct" id="Q9NVL1">
    <property type="molecule type" value="protein"/>
</dbReference>
<dbReference type="GO" id="GO:0032991">
    <property type="term" value="C:protein-containing complex"/>
    <property type="evidence" value="ECO:0000314"/>
    <property type="project" value="UniProtKB"/>
</dbReference>
<dbReference type="GO" id="GO:0008168">
    <property type="term" value="F:methyltransferase activity"/>
    <property type="evidence" value="ECO:0007669"/>
    <property type="project" value="UniProtKB-KW"/>
</dbReference>
<dbReference type="GO" id="GO:0032259">
    <property type="term" value="P:methylation"/>
    <property type="evidence" value="ECO:0007669"/>
    <property type="project" value="UniProtKB-KW"/>
</dbReference>
<dbReference type="InterPro" id="IPR029426">
    <property type="entry name" value="FAM86_N"/>
</dbReference>
<dbReference type="Pfam" id="PF14904">
    <property type="entry name" value="FAM86"/>
    <property type="match status" value="1"/>
</dbReference>
<sequence>MAPEENAGSELLLQSFKRRFLAARALRSFRWQSLEAKLRDSSDSELLRDILQKHEAVHTEPLDELYEVLVETLMAKESTQGHRSYLLTCCIAQKPSCRWSGSCGGWLPAGSTSGLLNSTWPLPSATQRCASCSPPSYAGLGSDGKRKLIMTRNCFPTESTWRWQS</sequence>
<protein>
    <recommendedName>
        <fullName>Putative protein FAM86C1P</fullName>
        <ecNumber evidence="1">2.1.1.-</ecNumber>
    </recommendedName>
    <alternativeName>
        <fullName>Protein FAM86C</fullName>
    </alternativeName>
</protein>